<comment type="catalytic activity">
    <reaction evidence="1">
        <text>tRNA(Phe) + L-phenylalanine + ATP = L-phenylalanyl-tRNA(Phe) + AMP + diphosphate + H(+)</text>
        <dbReference type="Rhea" id="RHEA:19413"/>
        <dbReference type="Rhea" id="RHEA-COMP:9668"/>
        <dbReference type="Rhea" id="RHEA-COMP:9699"/>
        <dbReference type="ChEBI" id="CHEBI:15378"/>
        <dbReference type="ChEBI" id="CHEBI:30616"/>
        <dbReference type="ChEBI" id="CHEBI:33019"/>
        <dbReference type="ChEBI" id="CHEBI:58095"/>
        <dbReference type="ChEBI" id="CHEBI:78442"/>
        <dbReference type="ChEBI" id="CHEBI:78531"/>
        <dbReference type="ChEBI" id="CHEBI:456215"/>
        <dbReference type="EC" id="6.1.1.20"/>
    </reaction>
</comment>
<comment type="cofactor">
    <cofactor evidence="1">
        <name>Mg(2+)</name>
        <dbReference type="ChEBI" id="CHEBI:18420"/>
    </cofactor>
    <text evidence="1">Binds 2 magnesium ions per tetramer.</text>
</comment>
<comment type="subunit">
    <text evidence="1">Tetramer of two alpha and two beta subunits.</text>
</comment>
<comment type="subcellular location">
    <subcellularLocation>
        <location evidence="1">Cytoplasm</location>
    </subcellularLocation>
</comment>
<comment type="similarity">
    <text evidence="1">Belongs to the class-II aminoacyl-tRNA synthetase family. Phe-tRNA synthetase alpha subunit type 1 subfamily.</text>
</comment>
<protein>
    <recommendedName>
        <fullName evidence="1">Phenylalanine--tRNA ligase alpha subunit</fullName>
        <ecNumber evidence="1">6.1.1.20</ecNumber>
    </recommendedName>
    <alternativeName>
        <fullName evidence="1">Phenylalanyl-tRNA synthetase alpha subunit</fullName>
        <shortName evidence="1">PheRS</shortName>
    </alternativeName>
</protein>
<name>SYFA_KLEP7</name>
<sequence>MSHLAELVASAKAAINEASDVAALDNVRVEYLGKKGHLTLQMTTLRELPPEERPAAGAVINEAKEQVQQALNARKAELEGAALNARLAAETIDVSLPGRRIENGGLHPVTRTIDRIESFFGELGFTVATGPEIEDDYHNFDALNIPGHHPARADHDTFWFDATRLLRTQTSGVQIRTMENQQPPIRIIAPGRVYRNDYDQTHTPMFHQMEGLIVDKNISFTNLKGTLHDFLNNFFEEDLQVRFRPSYFPFTEPSAEVDVMGKNGKWLEVLGCGMVHPNVLRNVGIDPEVYSGFAFGMGMERLTMLRYGVTDLRAFFENDLRFLKQFK</sequence>
<proteinExistence type="inferred from homology"/>
<keyword id="KW-0030">Aminoacyl-tRNA synthetase</keyword>
<keyword id="KW-0067">ATP-binding</keyword>
<keyword id="KW-0963">Cytoplasm</keyword>
<keyword id="KW-0436">Ligase</keyword>
<keyword id="KW-0460">Magnesium</keyword>
<keyword id="KW-0479">Metal-binding</keyword>
<keyword id="KW-0547">Nucleotide-binding</keyword>
<keyword id="KW-0648">Protein biosynthesis</keyword>
<gene>
    <name evidence="1" type="primary">pheS</name>
    <name type="ordered locus">KPN78578_21430</name>
    <name type="ORF">KPN_02176</name>
</gene>
<reference key="1">
    <citation type="submission" date="2006-09" db="EMBL/GenBank/DDBJ databases">
        <authorList>
            <consortium name="The Klebsiella pneumonia Genome Sequencing Project"/>
            <person name="McClelland M."/>
            <person name="Sanderson E.K."/>
            <person name="Spieth J."/>
            <person name="Clifton W.S."/>
            <person name="Latreille P."/>
            <person name="Sabo A."/>
            <person name="Pepin K."/>
            <person name="Bhonagiri V."/>
            <person name="Porwollik S."/>
            <person name="Ali J."/>
            <person name="Wilson R.K."/>
        </authorList>
    </citation>
    <scope>NUCLEOTIDE SEQUENCE [LARGE SCALE GENOMIC DNA]</scope>
    <source>
        <strain>ATCC 700721 / MGH 78578</strain>
    </source>
</reference>
<accession>A6TAI3</accession>
<dbReference type="EC" id="6.1.1.20" evidence="1"/>
<dbReference type="EMBL" id="CP000647">
    <property type="protein sequence ID" value="ABR77604.1"/>
    <property type="molecule type" value="Genomic_DNA"/>
</dbReference>
<dbReference type="RefSeq" id="WP_002909105.1">
    <property type="nucleotide sequence ID" value="NC_009648.1"/>
</dbReference>
<dbReference type="SMR" id="A6TAI3"/>
<dbReference type="STRING" id="272620.KPN_02176"/>
<dbReference type="jPOST" id="A6TAI3"/>
<dbReference type="PaxDb" id="272620-KPN_02176"/>
<dbReference type="EnsemblBacteria" id="ABR77604">
    <property type="protein sequence ID" value="ABR77604"/>
    <property type="gene ID" value="KPN_02176"/>
</dbReference>
<dbReference type="GeneID" id="93249434"/>
<dbReference type="KEGG" id="kpn:KPN_02176"/>
<dbReference type="HOGENOM" id="CLU_025086_0_1_6"/>
<dbReference type="Proteomes" id="UP000000265">
    <property type="component" value="Chromosome"/>
</dbReference>
<dbReference type="GO" id="GO:0005737">
    <property type="term" value="C:cytoplasm"/>
    <property type="evidence" value="ECO:0007669"/>
    <property type="project" value="UniProtKB-SubCell"/>
</dbReference>
<dbReference type="GO" id="GO:0005524">
    <property type="term" value="F:ATP binding"/>
    <property type="evidence" value="ECO:0007669"/>
    <property type="project" value="UniProtKB-UniRule"/>
</dbReference>
<dbReference type="GO" id="GO:0000287">
    <property type="term" value="F:magnesium ion binding"/>
    <property type="evidence" value="ECO:0007669"/>
    <property type="project" value="UniProtKB-UniRule"/>
</dbReference>
<dbReference type="GO" id="GO:0004826">
    <property type="term" value="F:phenylalanine-tRNA ligase activity"/>
    <property type="evidence" value="ECO:0007669"/>
    <property type="project" value="UniProtKB-UniRule"/>
</dbReference>
<dbReference type="GO" id="GO:0000049">
    <property type="term" value="F:tRNA binding"/>
    <property type="evidence" value="ECO:0007669"/>
    <property type="project" value="InterPro"/>
</dbReference>
<dbReference type="GO" id="GO:0006432">
    <property type="term" value="P:phenylalanyl-tRNA aminoacylation"/>
    <property type="evidence" value="ECO:0007669"/>
    <property type="project" value="UniProtKB-UniRule"/>
</dbReference>
<dbReference type="CDD" id="cd00496">
    <property type="entry name" value="PheRS_alpha_core"/>
    <property type="match status" value="1"/>
</dbReference>
<dbReference type="FunFam" id="3.30.930.10:FF:000003">
    <property type="entry name" value="Phenylalanine--tRNA ligase alpha subunit"/>
    <property type="match status" value="1"/>
</dbReference>
<dbReference type="Gene3D" id="3.30.930.10">
    <property type="entry name" value="Bira Bifunctional Protein, Domain 2"/>
    <property type="match status" value="1"/>
</dbReference>
<dbReference type="HAMAP" id="MF_00281">
    <property type="entry name" value="Phe_tRNA_synth_alpha1"/>
    <property type="match status" value="1"/>
</dbReference>
<dbReference type="InterPro" id="IPR006195">
    <property type="entry name" value="aa-tRNA-synth_II"/>
</dbReference>
<dbReference type="InterPro" id="IPR045864">
    <property type="entry name" value="aa-tRNA-synth_II/BPL/LPL"/>
</dbReference>
<dbReference type="InterPro" id="IPR004529">
    <property type="entry name" value="Phe-tRNA-synth_IIc_asu"/>
</dbReference>
<dbReference type="InterPro" id="IPR004188">
    <property type="entry name" value="Phe-tRNA_ligase_II_N"/>
</dbReference>
<dbReference type="InterPro" id="IPR022911">
    <property type="entry name" value="Phe_tRNA_ligase_alpha1_bac"/>
</dbReference>
<dbReference type="InterPro" id="IPR002319">
    <property type="entry name" value="Phenylalanyl-tRNA_Synthase"/>
</dbReference>
<dbReference type="InterPro" id="IPR010978">
    <property type="entry name" value="tRNA-bd_arm"/>
</dbReference>
<dbReference type="NCBIfam" id="TIGR00468">
    <property type="entry name" value="pheS"/>
    <property type="match status" value="1"/>
</dbReference>
<dbReference type="PANTHER" id="PTHR11538:SF41">
    <property type="entry name" value="PHENYLALANINE--TRNA LIGASE, MITOCHONDRIAL"/>
    <property type="match status" value="1"/>
</dbReference>
<dbReference type="PANTHER" id="PTHR11538">
    <property type="entry name" value="PHENYLALANYL-TRNA SYNTHETASE"/>
    <property type="match status" value="1"/>
</dbReference>
<dbReference type="Pfam" id="PF02912">
    <property type="entry name" value="Phe_tRNA-synt_N"/>
    <property type="match status" value="1"/>
</dbReference>
<dbReference type="Pfam" id="PF01409">
    <property type="entry name" value="tRNA-synt_2d"/>
    <property type="match status" value="1"/>
</dbReference>
<dbReference type="SUPFAM" id="SSF55681">
    <property type="entry name" value="Class II aaRS and biotin synthetases"/>
    <property type="match status" value="1"/>
</dbReference>
<dbReference type="SUPFAM" id="SSF46589">
    <property type="entry name" value="tRNA-binding arm"/>
    <property type="match status" value="1"/>
</dbReference>
<dbReference type="PROSITE" id="PS50862">
    <property type="entry name" value="AA_TRNA_LIGASE_II"/>
    <property type="match status" value="1"/>
</dbReference>
<organism>
    <name type="scientific">Klebsiella pneumoniae subsp. pneumoniae (strain ATCC 700721 / MGH 78578)</name>
    <dbReference type="NCBI Taxonomy" id="272620"/>
    <lineage>
        <taxon>Bacteria</taxon>
        <taxon>Pseudomonadati</taxon>
        <taxon>Pseudomonadota</taxon>
        <taxon>Gammaproteobacteria</taxon>
        <taxon>Enterobacterales</taxon>
        <taxon>Enterobacteriaceae</taxon>
        <taxon>Klebsiella/Raoultella group</taxon>
        <taxon>Klebsiella</taxon>
        <taxon>Klebsiella pneumoniae complex</taxon>
    </lineage>
</organism>
<feature type="chain" id="PRO_1000006845" description="Phenylalanine--tRNA ligase alpha subunit">
    <location>
        <begin position="1"/>
        <end position="327"/>
    </location>
</feature>
<feature type="binding site" evidence="1">
    <location>
        <position position="252"/>
    </location>
    <ligand>
        <name>Mg(2+)</name>
        <dbReference type="ChEBI" id="CHEBI:18420"/>
        <note>shared with beta subunit</note>
    </ligand>
</feature>
<evidence type="ECO:0000255" key="1">
    <source>
        <dbReference type="HAMAP-Rule" id="MF_00281"/>
    </source>
</evidence>